<keyword id="KW-0414">Isoprene biosynthesis</keyword>
<keyword id="KW-0460">Magnesium</keyword>
<keyword id="KW-0479">Metal-binding</keyword>
<keyword id="KW-1185">Reference proteome</keyword>
<keyword id="KW-0784">Thiamine biosynthesis</keyword>
<keyword id="KW-0786">Thiamine pyrophosphate</keyword>
<keyword id="KW-0808">Transferase</keyword>
<accession>Q8ZRD1</accession>
<organism>
    <name type="scientific">Salmonella typhimurium (strain LT2 / SGSC1412 / ATCC 700720)</name>
    <dbReference type="NCBI Taxonomy" id="99287"/>
    <lineage>
        <taxon>Bacteria</taxon>
        <taxon>Pseudomonadati</taxon>
        <taxon>Pseudomonadota</taxon>
        <taxon>Gammaproteobacteria</taxon>
        <taxon>Enterobacterales</taxon>
        <taxon>Enterobacteriaceae</taxon>
        <taxon>Salmonella</taxon>
    </lineage>
</organism>
<name>DXS_SALTY</name>
<sequence length="620" mass="67468">MSFDIAKYPTLALVDSTQELRLLPKESLPKLCDELRRYLLDSVSRSSGHFASGLGTVELTVALHYVYNTPFDQLIWDVGHQAYPHKILTGRRDKIGTIRQKGGLHPFPWRGESEYDVLSVGHSSTSISAGIGIAVAAEKEGKDRRTVCVIGDGAITAGMAFEAMNHAGDIRPDMLVILNDNEMSISENVGALNNHLAQLLSGKLYSSLREGGKKVFSGVPPIKELLKRTEEHIKGMVVPGTLFEELGFNYIGPVDGHDVMGLISTLKNMRDLKGPQFLHIMTKKGRGYEPAEKDPITFHAVPKFDPSSGCLPKSSGGLPGYSKIFGDWLCETAAKDSKLMAITPAMREGSGMVEFSRKFPDRYFDVAIAEQHAVTFAAGLAIGGYKPVVAIYSTFLQRAYDQVIHDVAIQKLPVMFAIDRAGIVGADGQTHQGAFDLSYLRCIPDMVIMTPSDENECRQMLFTGYHYNDGPTAVRYPRGNAQGVALTPLEKLPIGKGLVKRHGEKLAILNFGTLMPEAAKVAEALNATLVDMRFVKPLDDTLILEMAAQHDALVTLEENAIMGGAGSGVNEVLMAHRKPVPVLNIGLPDFFIPQGTQEEARAELGLDAAGIEAKIKAWLA</sequence>
<protein>
    <recommendedName>
        <fullName evidence="2">1-deoxy-D-xylulose-5-phosphate synthase</fullName>
        <ecNumber evidence="2">2.2.1.7</ecNumber>
    </recommendedName>
    <alternativeName>
        <fullName evidence="2">1-deoxyxylulose-5-phosphate synthase</fullName>
        <shortName evidence="2">DXP synthase</shortName>
        <shortName evidence="2">DXPS</shortName>
    </alternativeName>
</protein>
<comment type="function">
    <text evidence="2">Catalyzes the acyloin condensation reaction between C atoms 2 and 3 of pyruvate and glyceraldehyde 3-phosphate to yield 1-deoxy-D-xylulose-5-phosphate (DXP).</text>
</comment>
<comment type="catalytic activity">
    <reaction evidence="2">
        <text>D-glyceraldehyde 3-phosphate + pyruvate + H(+) = 1-deoxy-D-xylulose 5-phosphate + CO2</text>
        <dbReference type="Rhea" id="RHEA:12605"/>
        <dbReference type="ChEBI" id="CHEBI:15361"/>
        <dbReference type="ChEBI" id="CHEBI:15378"/>
        <dbReference type="ChEBI" id="CHEBI:16526"/>
        <dbReference type="ChEBI" id="CHEBI:57792"/>
        <dbReference type="ChEBI" id="CHEBI:59776"/>
        <dbReference type="EC" id="2.2.1.7"/>
    </reaction>
</comment>
<comment type="cofactor">
    <cofactor evidence="2">
        <name>Mg(2+)</name>
        <dbReference type="ChEBI" id="CHEBI:18420"/>
    </cofactor>
    <text evidence="2">Binds 1 Mg(2+) ion per subunit.</text>
</comment>
<comment type="cofactor">
    <cofactor evidence="2">
        <name>thiamine diphosphate</name>
        <dbReference type="ChEBI" id="CHEBI:58937"/>
    </cofactor>
    <text evidence="2">Binds 1 thiamine pyrophosphate per subunit.</text>
</comment>
<comment type="pathway">
    <text evidence="2">Metabolic intermediate biosynthesis; 1-deoxy-D-xylulose 5-phosphate biosynthesis; 1-deoxy-D-xylulose 5-phosphate from D-glyceraldehyde 3-phosphate and pyruvate: step 1/1.</text>
</comment>
<comment type="subunit">
    <text evidence="2">Homodimer.</text>
</comment>
<comment type="similarity">
    <text evidence="2">Belongs to the transketolase family. DXPS subfamily.</text>
</comment>
<reference key="1">
    <citation type="journal article" date="2001" name="Nature">
        <title>Complete genome sequence of Salmonella enterica serovar Typhimurium LT2.</title>
        <authorList>
            <person name="McClelland M."/>
            <person name="Sanderson K.E."/>
            <person name="Spieth J."/>
            <person name="Clifton S.W."/>
            <person name="Latreille P."/>
            <person name="Courtney L."/>
            <person name="Porwollik S."/>
            <person name="Ali J."/>
            <person name="Dante M."/>
            <person name="Du F."/>
            <person name="Hou S."/>
            <person name="Layman D."/>
            <person name="Leonard S."/>
            <person name="Nguyen C."/>
            <person name="Scott K."/>
            <person name="Holmes A."/>
            <person name="Grewal N."/>
            <person name="Mulvaney E."/>
            <person name="Ryan E."/>
            <person name="Sun H."/>
            <person name="Florea L."/>
            <person name="Miller W."/>
            <person name="Stoneking T."/>
            <person name="Nhan M."/>
            <person name="Waterston R."/>
            <person name="Wilson R.K."/>
        </authorList>
    </citation>
    <scope>NUCLEOTIDE SEQUENCE [LARGE SCALE GENOMIC DNA]</scope>
    <source>
        <strain>LT2 / SGSC1412 / ATCC 700720</strain>
    </source>
</reference>
<dbReference type="EC" id="2.2.1.7" evidence="2"/>
<dbReference type="EMBL" id="AE006468">
    <property type="protein sequence ID" value="AAL19376.1"/>
    <property type="molecule type" value="Genomic_DNA"/>
</dbReference>
<dbReference type="RefSeq" id="NP_459417.1">
    <property type="nucleotide sequence ID" value="NC_003197.2"/>
</dbReference>
<dbReference type="RefSeq" id="WP_000006777.1">
    <property type="nucleotide sequence ID" value="NC_003197.2"/>
</dbReference>
<dbReference type="SMR" id="Q8ZRD1"/>
<dbReference type="STRING" id="99287.STM0422"/>
<dbReference type="PaxDb" id="99287-STM0422"/>
<dbReference type="GeneID" id="1251941"/>
<dbReference type="KEGG" id="stm:STM0422"/>
<dbReference type="PATRIC" id="fig|99287.12.peg.451"/>
<dbReference type="HOGENOM" id="CLU_009227_1_4_6"/>
<dbReference type="OMA" id="QVGYHAQ"/>
<dbReference type="PhylomeDB" id="Q8ZRD1"/>
<dbReference type="BioCyc" id="SENT99287:STM0422-MONOMER"/>
<dbReference type="UniPathway" id="UPA00064">
    <property type="reaction ID" value="UER00091"/>
</dbReference>
<dbReference type="Proteomes" id="UP000001014">
    <property type="component" value="Chromosome"/>
</dbReference>
<dbReference type="GO" id="GO:0005829">
    <property type="term" value="C:cytosol"/>
    <property type="evidence" value="ECO:0000318"/>
    <property type="project" value="GO_Central"/>
</dbReference>
<dbReference type="GO" id="GO:0008661">
    <property type="term" value="F:1-deoxy-D-xylulose-5-phosphate synthase activity"/>
    <property type="evidence" value="ECO:0000318"/>
    <property type="project" value="GO_Central"/>
</dbReference>
<dbReference type="GO" id="GO:0000287">
    <property type="term" value="F:magnesium ion binding"/>
    <property type="evidence" value="ECO:0007669"/>
    <property type="project" value="UniProtKB-UniRule"/>
</dbReference>
<dbReference type="GO" id="GO:0030976">
    <property type="term" value="F:thiamine pyrophosphate binding"/>
    <property type="evidence" value="ECO:0007669"/>
    <property type="project" value="UniProtKB-UniRule"/>
</dbReference>
<dbReference type="GO" id="GO:0052865">
    <property type="term" value="P:1-deoxy-D-xylulose 5-phosphate biosynthetic process"/>
    <property type="evidence" value="ECO:0007669"/>
    <property type="project" value="UniProtKB-UniPathway"/>
</dbReference>
<dbReference type="GO" id="GO:0019288">
    <property type="term" value="P:isopentenyl diphosphate biosynthetic process, methylerythritol 4-phosphate pathway"/>
    <property type="evidence" value="ECO:0000318"/>
    <property type="project" value="GO_Central"/>
</dbReference>
<dbReference type="GO" id="GO:0016114">
    <property type="term" value="P:terpenoid biosynthetic process"/>
    <property type="evidence" value="ECO:0007669"/>
    <property type="project" value="UniProtKB-UniRule"/>
</dbReference>
<dbReference type="GO" id="GO:0009228">
    <property type="term" value="P:thiamine biosynthetic process"/>
    <property type="evidence" value="ECO:0007669"/>
    <property type="project" value="UniProtKB-UniRule"/>
</dbReference>
<dbReference type="CDD" id="cd02007">
    <property type="entry name" value="TPP_DXS"/>
    <property type="match status" value="1"/>
</dbReference>
<dbReference type="CDD" id="cd07033">
    <property type="entry name" value="TPP_PYR_DXS_TK_like"/>
    <property type="match status" value="1"/>
</dbReference>
<dbReference type="FunFam" id="3.40.50.920:FF:000002">
    <property type="entry name" value="1-deoxy-D-xylulose-5-phosphate synthase"/>
    <property type="match status" value="1"/>
</dbReference>
<dbReference type="FunFam" id="3.40.50.970:FF:000005">
    <property type="entry name" value="1-deoxy-D-xylulose-5-phosphate synthase"/>
    <property type="match status" value="1"/>
</dbReference>
<dbReference type="Gene3D" id="3.40.50.920">
    <property type="match status" value="1"/>
</dbReference>
<dbReference type="Gene3D" id="3.40.50.970">
    <property type="match status" value="2"/>
</dbReference>
<dbReference type="HAMAP" id="MF_00315">
    <property type="entry name" value="DXP_synth"/>
    <property type="match status" value="1"/>
</dbReference>
<dbReference type="InterPro" id="IPR005477">
    <property type="entry name" value="Dxylulose-5-P_synthase"/>
</dbReference>
<dbReference type="InterPro" id="IPR029061">
    <property type="entry name" value="THDP-binding"/>
</dbReference>
<dbReference type="InterPro" id="IPR009014">
    <property type="entry name" value="Transketo_C/PFOR_II"/>
</dbReference>
<dbReference type="InterPro" id="IPR005475">
    <property type="entry name" value="Transketolase-like_Pyr-bd"/>
</dbReference>
<dbReference type="InterPro" id="IPR020826">
    <property type="entry name" value="Transketolase_BS"/>
</dbReference>
<dbReference type="InterPro" id="IPR033248">
    <property type="entry name" value="Transketolase_C"/>
</dbReference>
<dbReference type="InterPro" id="IPR049557">
    <property type="entry name" value="Transketolase_CS"/>
</dbReference>
<dbReference type="NCBIfam" id="TIGR00204">
    <property type="entry name" value="dxs"/>
    <property type="match status" value="1"/>
</dbReference>
<dbReference type="NCBIfam" id="NF003933">
    <property type="entry name" value="PRK05444.2-2"/>
    <property type="match status" value="1"/>
</dbReference>
<dbReference type="PANTHER" id="PTHR43322">
    <property type="entry name" value="1-D-DEOXYXYLULOSE 5-PHOSPHATE SYNTHASE-RELATED"/>
    <property type="match status" value="1"/>
</dbReference>
<dbReference type="PANTHER" id="PTHR43322:SF5">
    <property type="entry name" value="1-DEOXY-D-XYLULOSE-5-PHOSPHATE SYNTHASE, CHLOROPLASTIC"/>
    <property type="match status" value="1"/>
</dbReference>
<dbReference type="Pfam" id="PF13292">
    <property type="entry name" value="DXP_synthase_N"/>
    <property type="match status" value="1"/>
</dbReference>
<dbReference type="Pfam" id="PF02779">
    <property type="entry name" value="Transket_pyr"/>
    <property type="match status" value="1"/>
</dbReference>
<dbReference type="Pfam" id="PF02780">
    <property type="entry name" value="Transketolase_C"/>
    <property type="match status" value="1"/>
</dbReference>
<dbReference type="SMART" id="SM00861">
    <property type="entry name" value="Transket_pyr"/>
    <property type="match status" value="1"/>
</dbReference>
<dbReference type="SUPFAM" id="SSF52518">
    <property type="entry name" value="Thiamin diphosphate-binding fold (THDP-binding)"/>
    <property type="match status" value="2"/>
</dbReference>
<dbReference type="SUPFAM" id="SSF52922">
    <property type="entry name" value="TK C-terminal domain-like"/>
    <property type="match status" value="1"/>
</dbReference>
<dbReference type="PROSITE" id="PS00801">
    <property type="entry name" value="TRANSKETOLASE_1"/>
    <property type="match status" value="1"/>
</dbReference>
<dbReference type="PROSITE" id="PS00802">
    <property type="entry name" value="TRANSKETOLASE_2"/>
    <property type="match status" value="1"/>
</dbReference>
<evidence type="ECO:0000250" key="1"/>
<evidence type="ECO:0000255" key="2">
    <source>
        <dbReference type="HAMAP-Rule" id="MF_00315"/>
    </source>
</evidence>
<gene>
    <name evidence="2" type="primary">dxs</name>
    <name type="ordered locus">STM0422</name>
</gene>
<proteinExistence type="inferred from homology"/>
<feature type="initiator methionine" description="Removed" evidence="1">
    <location>
        <position position="1"/>
    </location>
</feature>
<feature type="chain" id="PRO_0000189151" description="1-deoxy-D-xylulose-5-phosphate synthase">
    <location>
        <begin position="2"/>
        <end position="620"/>
    </location>
</feature>
<feature type="binding site" evidence="2">
    <location>
        <position position="80"/>
    </location>
    <ligand>
        <name>thiamine diphosphate</name>
        <dbReference type="ChEBI" id="CHEBI:58937"/>
    </ligand>
</feature>
<feature type="binding site" evidence="2">
    <location>
        <begin position="121"/>
        <end position="123"/>
    </location>
    <ligand>
        <name>thiamine diphosphate</name>
        <dbReference type="ChEBI" id="CHEBI:58937"/>
    </ligand>
</feature>
<feature type="binding site" evidence="2">
    <location>
        <position position="152"/>
    </location>
    <ligand>
        <name>Mg(2+)</name>
        <dbReference type="ChEBI" id="CHEBI:18420"/>
    </ligand>
</feature>
<feature type="binding site" evidence="2">
    <location>
        <begin position="153"/>
        <end position="154"/>
    </location>
    <ligand>
        <name>thiamine diphosphate</name>
        <dbReference type="ChEBI" id="CHEBI:58937"/>
    </ligand>
</feature>
<feature type="binding site" evidence="2">
    <location>
        <position position="181"/>
    </location>
    <ligand>
        <name>Mg(2+)</name>
        <dbReference type="ChEBI" id="CHEBI:18420"/>
    </ligand>
</feature>
<feature type="binding site" evidence="2">
    <location>
        <position position="181"/>
    </location>
    <ligand>
        <name>thiamine diphosphate</name>
        <dbReference type="ChEBI" id="CHEBI:58937"/>
    </ligand>
</feature>
<feature type="binding site" evidence="2">
    <location>
        <position position="288"/>
    </location>
    <ligand>
        <name>thiamine diphosphate</name>
        <dbReference type="ChEBI" id="CHEBI:58937"/>
    </ligand>
</feature>
<feature type="binding site" evidence="2">
    <location>
        <position position="370"/>
    </location>
    <ligand>
        <name>thiamine diphosphate</name>
        <dbReference type="ChEBI" id="CHEBI:58937"/>
    </ligand>
</feature>